<protein>
    <recommendedName>
        <fullName evidence="4">1-deoxy-D-xylulose-5-phosphate synthase 1, chloroplastic</fullName>
        <shortName evidence="4">CsDXS1</shortName>
        <ecNumber evidence="1">2.2.1.7</ecNumber>
    </recommendedName>
</protein>
<gene>
    <name evidence="4" type="primary">DXS1</name>
    <name evidence="6" type="ORF">F8388_013646</name>
    <name evidence="7" type="ORF">G4B88_007774</name>
</gene>
<organism>
    <name type="scientific">Cannabis sativa</name>
    <name type="common">Hemp</name>
    <name type="synonym">Marijuana</name>
    <dbReference type="NCBI Taxonomy" id="3483"/>
    <lineage>
        <taxon>Eukaryota</taxon>
        <taxon>Viridiplantae</taxon>
        <taxon>Streptophyta</taxon>
        <taxon>Embryophyta</taxon>
        <taxon>Tracheophyta</taxon>
        <taxon>Spermatophyta</taxon>
        <taxon>Magnoliopsida</taxon>
        <taxon>eudicotyledons</taxon>
        <taxon>Gunneridae</taxon>
        <taxon>Pentapetalae</taxon>
        <taxon>rosids</taxon>
        <taxon>fabids</taxon>
        <taxon>Rosales</taxon>
        <taxon>Cannabaceae</taxon>
        <taxon>Cannabis</taxon>
    </lineage>
</organism>
<keyword id="KW-0150">Chloroplast</keyword>
<keyword id="KW-0414">Isoprene biosynthesis</keyword>
<keyword id="KW-0460">Magnesium</keyword>
<keyword id="KW-0479">Metal-binding</keyword>
<keyword id="KW-0934">Plastid</keyword>
<keyword id="KW-1185">Reference proteome</keyword>
<keyword id="KW-0784">Thiamine biosynthesis</keyword>
<keyword id="KW-0786">Thiamine pyrophosphate</keyword>
<keyword id="KW-0808">Transferase</keyword>
<keyword id="KW-0809">Transit peptide</keyword>
<comment type="function">
    <text evidence="1">Catalyzes the acyloin condensation reaction between C atoms 2 and 3 of pyruvate and glyceraldehyde 3-phosphate to yield 1-deoxy-D-xylulose-5-phosphate (DXP).</text>
</comment>
<comment type="catalytic activity">
    <reaction evidence="1">
        <text>D-glyceraldehyde 3-phosphate + pyruvate + H(+) = 1-deoxy-D-xylulose 5-phosphate + CO2</text>
        <dbReference type="Rhea" id="RHEA:12605"/>
        <dbReference type="ChEBI" id="CHEBI:15361"/>
        <dbReference type="ChEBI" id="CHEBI:15378"/>
        <dbReference type="ChEBI" id="CHEBI:16526"/>
        <dbReference type="ChEBI" id="CHEBI:57792"/>
        <dbReference type="ChEBI" id="CHEBI:59776"/>
        <dbReference type="EC" id="2.2.1.7"/>
    </reaction>
    <physiologicalReaction direction="left-to-right" evidence="1">
        <dbReference type="Rhea" id="RHEA:12606"/>
    </physiologicalReaction>
</comment>
<comment type="cofactor">
    <cofactor evidence="1">
        <name>Mg(2+)</name>
        <dbReference type="ChEBI" id="CHEBI:18420"/>
    </cofactor>
    <text evidence="1">Binds 1 Mg(2+) ion per subunit.</text>
</comment>
<comment type="cofactor">
    <cofactor evidence="1">
        <name>thiamine diphosphate</name>
        <dbReference type="ChEBI" id="CHEBI:58937"/>
    </cofactor>
    <text evidence="1">Binds 1 thiamine pyrophosphate per subunit.</text>
</comment>
<comment type="pathway">
    <text evidence="1">Metabolic intermediate biosynthesis; 1-deoxy-D-xylulose 5-phosphate biosynthesis; 1-deoxy-D-xylulose 5-phosphate from D-glyceraldehyde 3-phosphate and pyruvate: step 1/1.</text>
</comment>
<comment type="subunit">
    <text evidence="1">Homodimer.</text>
</comment>
<comment type="subcellular location">
    <subcellularLocation>
        <location evidence="2">Plastid</location>
        <location evidence="2">Chloroplast</location>
    </subcellularLocation>
</comment>
<comment type="tissue specificity">
    <text evidence="3">Expressed in trichomes, leaves, flowers, roots and stems.</text>
</comment>
<comment type="similarity">
    <text evidence="5">Belongs to the transketolase family. DXPS subfamily.</text>
</comment>
<dbReference type="EC" id="2.2.1.7" evidence="1"/>
<dbReference type="EMBL" id="KY014576">
    <property type="protein sequence ID" value="ARE72272.1"/>
    <property type="molecule type" value="mRNA"/>
</dbReference>
<dbReference type="EMBL" id="JAATIP010000220">
    <property type="protein sequence ID" value="KAF4358842.1"/>
    <property type="molecule type" value="Genomic_DNA"/>
</dbReference>
<dbReference type="EMBL" id="JAATIQ010000048">
    <property type="protein sequence ID" value="KAF4393788.1"/>
    <property type="molecule type" value="Genomic_DNA"/>
</dbReference>
<dbReference type="EMBL" id="UZAU01000635">
    <property type="status" value="NOT_ANNOTATED_CDS"/>
    <property type="molecule type" value="Genomic_DNA"/>
</dbReference>
<dbReference type="SMR" id="A0A7J6EK66"/>
<dbReference type="OMA" id="QVGYHAQ"/>
<dbReference type="UniPathway" id="UPA00064">
    <property type="reaction ID" value="UER00091"/>
</dbReference>
<dbReference type="Proteomes" id="UP000525078">
    <property type="component" value="Unassembled WGS sequence"/>
</dbReference>
<dbReference type="Proteomes" id="UP000583929">
    <property type="component" value="Unassembled WGS sequence"/>
</dbReference>
<dbReference type="Proteomes" id="UP000596661">
    <property type="component" value="Chromosome 7"/>
</dbReference>
<dbReference type="GO" id="GO:0009507">
    <property type="term" value="C:chloroplast"/>
    <property type="evidence" value="ECO:0007669"/>
    <property type="project" value="UniProtKB-SubCell"/>
</dbReference>
<dbReference type="GO" id="GO:0008661">
    <property type="term" value="F:1-deoxy-D-xylulose-5-phosphate synthase activity"/>
    <property type="evidence" value="ECO:0007669"/>
    <property type="project" value="UniProtKB-EC"/>
</dbReference>
<dbReference type="GO" id="GO:0046872">
    <property type="term" value="F:metal ion binding"/>
    <property type="evidence" value="ECO:0007669"/>
    <property type="project" value="UniProtKB-KW"/>
</dbReference>
<dbReference type="GO" id="GO:0052865">
    <property type="term" value="P:1-deoxy-D-xylulose 5-phosphate biosynthetic process"/>
    <property type="evidence" value="ECO:0007669"/>
    <property type="project" value="UniProtKB-UniPathway"/>
</dbReference>
<dbReference type="GO" id="GO:0015995">
    <property type="term" value="P:chlorophyll biosynthetic process"/>
    <property type="evidence" value="ECO:0007669"/>
    <property type="project" value="TreeGrafter"/>
</dbReference>
<dbReference type="GO" id="GO:0019682">
    <property type="term" value="P:glyceraldehyde-3-phosphate metabolic process"/>
    <property type="evidence" value="ECO:0007669"/>
    <property type="project" value="UniProtKB-ARBA"/>
</dbReference>
<dbReference type="GO" id="GO:0016114">
    <property type="term" value="P:terpenoid biosynthetic process"/>
    <property type="evidence" value="ECO:0007669"/>
    <property type="project" value="InterPro"/>
</dbReference>
<dbReference type="GO" id="GO:0009228">
    <property type="term" value="P:thiamine biosynthetic process"/>
    <property type="evidence" value="ECO:0007669"/>
    <property type="project" value="UniProtKB-KW"/>
</dbReference>
<dbReference type="CDD" id="cd02007">
    <property type="entry name" value="TPP_DXS"/>
    <property type="match status" value="1"/>
</dbReference>
<dbReference type="CDD" id="cd07033">
    <property type="entry name" value="TPP_PYR_DXS_TK_like"/>
    <property type="match status" value="1"/>
</dbReference>
<dbReference type="FunFam" id="3.40.50.920:FF:000002">
    <property type="entry name" value="1-deoxy-D-xylulose-5-phosphate synthase"/>
    <property type="match status" value="1"/>
</dbReference>
<dbReference type="FunFam" id="3.40.50.970:FF:000005">
    <property type="entry name" value="1-deoxy-D-xylulose-5-phosphate synthase"/>
    <property type="match status" value="1"/>
</dbReference>
<dbReference type="Gene3D" id="3.40.50.920">
    <property type="match status" value="1"/>
</dbReference>
<dbReference type="Gene3D" id="3.40.50.970">
    <property type="match status" value="2"/>
</dbReference>
<dbReference type="HAMAP" id="MF_00315">
    <property type="entry name" value="DXP_synth"/>
    <property type="match status" value="1"/>
</dbReference>
<dbReference type="InterPro" id="IPR005477">
    <property type="entry name" value="Dxylulose-5-P_synthase"/>
</dbReference>
<dbReference type="InterPro" id="IPR029061">
    <property type="entry name" value="THDP-binding"/>
</dbReference>
<dbReference type="InterPro" id="IPR009014">
    <property type="entry name" value="Transketo_C/PFOR_II"/>
</dbReference>
<dbReference type="InterPro" id="IPR005475">
    <property type="entry name" value="Transketolase-like_Pyr-bd"/>
</dbReference>
<dbReference type="InterPro" id="IPR020826">
    <property type="entry name" value="Transketolase_BS"/>
</dbReference>
<dbReference type="InterPro" id="IPR033248">
    <property type="entry name" value="Transketolase_C"/>
</dbReference>
<dbReference type="InterPro" id="IPR049557">
    <property type="entry name" value="Transketolase_CS"/>
</dbReference>
<dbReference type="NCBIfam" id="TIGR00204">
    <property type="entry name" value="dxs"/>
    <property type="match status" value="1"/>
</dbReference>
<dbReference type="NCBIfam" id="NF003933">
    <property type="entry name" value="PRK05444.2-2"/>
    <property type="match status" value="1"/>
</dbReference>
<dbReference type="PANTHER" id="PTHR43322">
    <property type="entry name" value="1-D-DEOXYXYLULOSE 5-PHOSPHATE SYNTHASE-RELATED"/>
    <property type="match status" value="1"/>
</dbReference>
<dbReference type="PANTHER" id="PTHR43322:SF5">
    <property type="entry name" value="1-DEOXY-D-XYLULOSE-5-PHOSPHATE SYNTHASE, CHLOROPLASTIC"/>
    <property type="match status" value="1"/>
</dbReference>
<dbReference type="Pfam" id="PF13292">
    <property type="entry name" value="DXP_synthase_N"/>
    <property type="match status" value="1"/>
</dbReference>
<dbReference type="Pfam" id="PF02779">
    <property type="entry name" value="Transket_pyr"/>
    <property type="match status" value="1"/>
</dbReference>
<dbReference type="Pfam" id="PF02780">
    <property type="entry name" value="Transketolase_C"/>
    <property type="match status" value="1"/>
</dbReference>
<dbReference type="SMART" id="SM00861">
    <property type="entry name" value="Transket_pyr"/>
    <property type="match status" value="1"/>
</dbReference>
<dbReference type="SUPFAM" id="SSF52518">
    <property type="entry name" value="Thiamin diphosphate-binding fold (THDP-binding)"/>
    <property type="match status" value="2"/>
</dbReference>
<dbReference type="SUPFAM" id="SSF52922">
    <property type="entry name" value="TK C-terminal domain-like"/>
    <property type="match status" value="1"/>
</dbReference>
<dbReference type="PROSITE" id="PS00801">
    <property type="entry name" value="TRANSKETOLASE_1"/>
    <property type="match status" value="1"/>
</dbReference>
<dbReference type="PROSITE" id="PS00802">
    <property type="entry name" value="TRANSKETOLASE_2"/>
    <property type="match status" value="1"/>
</dbReference>
<proteinExistence type="evidence at transcript level"/>
<sequence>MAFCALSFPAHISRATTPAPSDLQKSSSFSSRFYWGADLLRPSQYKVRKIQSGVYASLSESGEYHSRRPPTPLLDTINYPIHMKNLSVKELKQLSDELRSDVIFNVSNTGGHLGSSLGVVELTVALHFVFNTPQDRILWDVGHQSYPHKILTGRRDKMHTMRQTNGLAGFTKRSESEYDCFGTGHSSTTISAGLGMAVGRDLKGRKNNVVAVIGDGAMTAGQAYEAMNNAGYLDSDMIIILNDNKQVSLPTASLDGPIPPVGALSSALSRLQSNRPLRELREVAKGVTKQIGGSVHELAAKVDEYARGMISGSGSTLFEELGLYYIGPVDGHNIDDLVSILEEVKSTKTTGPVLIHCITEKGRGYPYAEKAADKYHGVAKFDPATGKQFKGTSNTQSYTTYFAEALVAEAEADKDVVAIHAAMGGGTGLNLFLRRFPTRCFDVGIAEQHAVTFAAGLACEGLKPFCAIYSSFMQRAYDQAIHDVDLQKLPVRFAMDRAGLVGADGPTHCGAFDVTFMACLPNMVVMAPSDEAELFHMVATAAAIDDRPSCFRYPRGNGIGVPLPQGNKGTPLEIGKGRVLVEGERVALLGYGTAVQSCLAAAALVEPHGLRLTVADARFCKPLDHALIRELAKNHEVLITVEEGSIGGFGSHVAQFMALDGLLDGKTKWRPIVLPDRYIDHGSPADQYVDAGLTPPHIAATVFNVLGQTREALKVMTT</sequence>
<accession>A0A7J6EK66</accession>
<accession>A0A1V0QSH6</accession>
<accession>A0A803Q5F5</accession>
<evidence type="ECO:0000250" key="1">
    <source>
        <dbReference type="UniProtKB" id="P77488"/>
    </source>
</evidence>
<evidence type="ECO:0000255" key="2"/>
<evidence type="ECO:0000269" key="3">
    <source>
    </source>
</evidence>
<evidence type="ECO:0000303" key="4">
    <source>
    </source>
</evidence>
<evidence type="ECO:0000305" key="5"/>
<evidence type="ECO:0000312" key="6">
    <source>
        <dbReference type="EMBL" id="KAF4358842.1"/>
    </source>
</evidence>
<evidence type="ECO:0000312" key="7">
    <source>
        <dbReference type="EMBL" id="KAF4393788.1"/>
    </source>
</evidence>
<reference key="1">
    <citation type="journal article" date="2017" name="PLoS ONE">
        <title>Terpene synthases from Cannabis sativa.</title>
        <authorList>
            <person name="Booth J.K."/>
            <person name="Page J.E."/>
            <person name="Bohlmann J."/>
        </authorList>
    </citation>
    <scope>NUCLEOTIDE SEQUENCE [MRNA]</scope>
    <scope>TISSUE SPECIFICITY</scope>
    <source>
        <strain>cv. Finola</strain>
        <strain>cv. Purple Kush TPS13</strain>
    </source>
</reference>
<reference key="2">
    <citation type="submission" date="2020-03" db="EMBL/GenBank/DDBJ databases">
        <title>Sequence and annotation of 42 cannabis genomes reveals extensive copy number variation in cannabinoid synthesis and pathogen resistance genes.</title>
        <authorList>
            <person name="Mckernan K.J."/>
            <person name="Helbert Y."/>
            <person name="Kane L.T."/>
            <person name="Ebling H."/>
            <person name="Zhang L."/>
            <person name="Liu B."/>
            <person name="Eaton Z."/>
            <person name="Mclaughlin S."/>
            <person name="Kingan S."/>
            <person name="Baybayan P."/>
            <person name="Concepcion G."/>
            <person name="Jordan M."/>
            <person name="Riva A."/>
            <person name="Barbazuk W."/>
            <person name="Harkins T."/>
        </authorList>
    </citation>
    <scope>NUCLEOTIDE SEQUENCE [LARGE SCALE GENOMIC DNA]</scope>
    <source>
        <strain>cv. Jamaican Lion 4</strain>
        <tissue>Leaf</tissue>
    </source>
</reference>
<feature type="transit peptide" description="Chloroplast" evidence="2">
    <location>
        <begin position="1"/>
        <end position="55"/>
    </location>
</feature>
<feature type="chain" id="PRO_0000460883" description="1-deoxy-D-xylulose-5-phosphate synthase 1, chloroplastic">
    <location>
        <begin position="56"/>
        <end position="718"/>
    </location>
</feature>
<feature type="binding site" evidence="1">
    <location>
        <position position="143"/>
    </location>
    <ligand>
        <name>thiamine diphosphate</name>
        <dbReference type="ChEBI" id="CHEBI:58937"/>
    </ligand>
</feature>
<feature type="binding site" evidence="1">
    <location>
        <begin position="184"/>
        <end position="186"/>
    </location>
    <ligand>
        <name>thiamine diphosphate</name>
        <dbReference type="ChEBI" id="CHEBI:58937"/>
    </ligand>
</feature>
<feature type="binding site" evidence="1">
    <location>
        <position position="215"/>
    </location>
    <ligand>
        <name>Mg(2+)</name>
        <dbReference type="ChEBI" id="CHEBI:18420"/>
    </ligand>
</feature>
<feature type="binding site" evidence="1">
    <location>
        <begin position="216"/>
        <end position="217"/>
    </location>
    <ligand>
        <name>thiamine diphosphate</name>
        <dbReference type="ChEBI" id="CHEBI:58937"/>
    </ligand>
</feature>
<feature type="binding site" evidence="1">
    <location>
        <position position="244"/>
    </location>
    <ligand>
        <name>Mg(2+)</name>
        <dbReference type="ChEBI" id="CHEBI:18420"/>
    </ligand>
</feature>
<feature type="binding site" evidence="1">
    <location>
        <position position="244"/>
    </location>
    <ligand>
        <name>thiamine diphosphate</name>
        <dbReference type="ChEBI" id="CHEBI:58937"/>
    </ligand>
</feature>
<feature type="binding site" evidence="1">
    <location>
        <position position="365"/>
    </location>
    <ligand>
        <name>thiamine diphosphate</name>
        <dbReference type="ChEBI" id="CHEBI:58937"/>
    </ligand>
</feature>
<feature type="binding site" evidence="1">
    <location>
        <position position="447"/>
    </location>
    <ligand>
        <name>thiamine diphosphate</name>
        <dbReference type="ChEBI" id="CHEBI:58937"/>
    </ligand>
</feature>
<feature type="sequence conflict" description="In Ref. 1; ARE72272." evidence="5" ref="1">
    <original>AI</original>
    <variation>VV</variation>
    <location>
        <begin position="480"/>
        <end position="481"/>
    </location>
</feature>
<name>DXS1_CANSA</name>